<keyword id="KW-0079">Bacteriocin immunity</keyword>
<keyword id="KW-0614">Plasmid</keyword>
<protein>
    <recommendedName>
        <fullName>Colicin-E1 immunity protein</fullName>
    </recommendedName>
    <alternativeName>
        <fullName>ImmE1</fullName>
    </alternativeName>
    <alternativeName>
        <fullName>Microcin-E1 immunity protein</fullName>
    </alternativeName>
</protein>
<organism>
    <name type="scientific">Escherichia coli</name>
    <dbReference type="NCBI Taxonomy" id="562"/>
    <lineage>
        <taxon>Bacteria</taxon>
        <taxon>Pseudomonadati</taxon>
        <taxon>Pseudomonadota</taxon>
        <taxon>Gammaproteobacteria</taxon>
        <taxon>Enterobacterales</taxon>
        <taxon>Enterobacteriaceae</taxon>
        <taxon>Escherichia</taxon>
    </lineage>
</organism>
<gene>
    <name type="primary">imm</name>
</gene>
<sequence length="113" mass="13287">MSLRYYIKNILFGLYCTLIYIYLITKNSEGYYFLVSDKMLYAIVISTILCPYSKYAIEYIAFNFIKKDFFERRKNLNNAPVAKLNLFMLYNLLCLVLAIPFGLLGLFISIKNN</sequence>
<geneLocation type="plasmid">
    <name>ColE1</name>
</geneLocation>
<comment type="function">
    <text>This protein is able to protect a cell, which harbors the plasmid ColE1 encoding colicin E1, against colicin E1.</text>
</comment>
<name>IMM1_ECOLX</name>
<feature type="chain" id="PRO_0000218700" description="Colicin-E1 immunity protein">
    <location>
        <begin position="1"/>
        <end position="113"/>
    </location>
</feature>
<feature type="sequence conflict" description="In Ref. 1; AAA23066." evidence="1" ref="1">
    <original>G</original>
    <variation>E</variation>
    <location>
        <position position="105"/>
    </location>
</feature>
<dbReference type="EMBL" id="J01566">
    <property type="protein sequence ID" value="AAB59122.1"/>
    <property type="molecule type" value="Genomic_DNA"/>
</dbReference>
<dbReference type="EMBL" id="M12543">
    <property type="protein sequence ID" value="AAA23066.1"/>
    <property type="molecule type" value="Genomic_DNA"/>
</dbReference>
<dbReference type="EMBL" id="V00268">
    <property type="protein sequence ID" value="CAA23529.1"/>
    <property type="molecule type" value="Genomic_DNA"/>
</dbReference>
<dbReference type="PIR" id="A94079">
    <property type="entry name" value="IMECE1"/>
</dbReference>
<dbReference type="RefSeq" id="NP_040357.1">
    <property type="nucleotide sequence ID" value="NC_001371.1"/>
</dbReference>
<dbReference type="RefSeq" id="WP_000058760.1">
    <property type="nucleotide sequence ID" value="NZ_WVVR01000058.1"/>
</dbReference>
<dbReference type="RefSeq" id="YP_009069933.1">
    <property type="nucleotide sequence ID" value="NC_025157.1"/>
</dbReference>
<dbReference type="RefSeq" id="YP_009071083.1">
    <property type="nucleotide sequence ID" value="NC_025178.1"/>
</dbReference>
<dbReference type="SMR" id="P02985"/>
<dbReference type="GO" id="GO:0015643">
    <property type="term" value="F:toxic substance binding"/>
    <property type="evidence" value="ECO:0007669"/>
    <property type="project" value="InterPro"/>
</dbReference>
<dbReference type="GO" id="GO:0030153">
    <property type="term" value="P:bacteriocin immunity"/>
    <property type="evidence" value="ECO:0007669"/>
    <property type="project" value="UniProtKB-KW"/>
</dbReference>
<dbReference type="InterPro" id="IPR003061">
    <property type="entry name" value="Microcin"/>
</dbReference>
<dbReference type="Pfam" id="PF03526">
    <property type="entry name" value="Microcin"/>
    <property type="match status" value="1"/>
</dbReference>
<dbReference type="PRINTS" id="PR01298">
    <property type="entry name" value="MICROCIN"/>
</dbReference>
<evidence type="ECO:0000305" key="1"/>
<proteinExistence type="predicted"/>
<reference key="1">
    <citation type="journal article" date="1985" name="Proc. Natl. Acad. Sci. U.S.A.">
        <title>Structural and functional organization of the colicin E1 operon.</title>
        <authorList>
            <person name="Waleh N.S."/>
            <person name="Johnson P.H."/>
        </authorList>
    </citation>
    <scope>NUCLEOTIDE SEQUENCE [GENOMIC DNA]</scope>
</reference>
<reference key="2">
    <citation type="journal article" date="1979" name="Mol. Gen. Genet.">
        <title>Nucleotide sequence of small ColE1 derivatives: structure of the regions essential for autonomous replication and colicin E1 immunity.</title>
        <authorList>
            <person name="Oka A."/>
            <person name="Nomura N."/>
            <person name="Morita M."/>
            <person name="Sugisaki H."/>
            <person name="Sugimoto K."/>
            <person name="Takanami M."/>
        </authorList>
    </citation>
    <scope>NUCLEOTIDE SEQUENCE [GENOMIC DNA]</scope>
</reference>
<reference key="3">
    <citation type="journal article" date="1993" name="J. Bacteriol.">
        <title>Implications of Tn5-associated adjacent deletions.</title>
        <authorList>
            <person name="Jilk R.A."/>
            <person name="Makris J.C."/>
            <person name="Borchardt L."/>
            <person name="Reznikoff W.S."/>
        </authorList>
    </citation>
    <scope>NUCLEOTIDE SEQUENCE [GENOMIC DNA]</scope>
</reference>
<accession>P02985</accession>